<accession>A7ND27</accession>
<organism>
    <name type="scientific">Francisella tularensis subsp. holarctica (strain FTNF002-00 / FTA)</name>
    <dbReference type="NCBI Taxonomy" id="458234"/>
    <lineage>
        <taxon>Bacteria</taxon>
        <taxon>Pseudomonadati</taxon>
        <taxon>Pseudomonadota</taxon>
        <taxon>Gammaproteobacteria</taxon>
        <taxon>Thiotrichales</taxon>
        <taxon>Francisellaceae</taxon>
        <taxon>Francisella</taxon>
    </lineage>
</organism>
<proteinExistence type="inferred from homology"/>
<sequence>MNKIAIYPGTFDPITNGHVDLVERALNIFDEIVVAVSTAYGKNTLFDIRIREQMIKEVFKDNQRVKVVSFQGLLVDTAVKHNACAIVRGLRAVSDFDYEFQMSSMNNKLNSDIQTIFLTPSEKFSCISSTLVRAVAIHNYKRVDEFVPECVFREIKLKYSKE</sequence>
<reference key="1">
    <citation type="journal article" date="2009" name="PLoS ONE">
        <title>Complete genome sequence of Francisella tularensis subspecies holarctica FTNF002-00.</title>
        <authorList>
            <person name="Barabote R.D."/>
            <person name="Xie G."/>
            <person name="Brettin T.S."/>
            <person name="Hinrichs S.H."/>
            <person name="Fey P.D."/>
            <person name="Jay J.J."/>
            <person name="Engle J.L."/>
            <person name="Godbole S.D."/>
            <person name="Noronha J.M."/>
            <person name="Scheuermann R.H."/>
            <person name="Zhou L.W."/>
            <person name="Lion C."/>
            <person name="Dempsey M.P."/>
        </authorList>
    </citation>
    <scope>NUCLEOTIDE SEQUENCE [LARGE SCALE GENOMIC DNA]</scope>
    <source>
        <strain>FTNF002-00 / FTA</strain>
    </source>
</reference>
<gene>
    <name evidence="1" type="primary">coaD</name>
    <name type="ordered locus">FTA_1405</name>
</gene>
<keyword id="KW-0067">ATP-binding</keyword>
<keyword id="KW-0173">Coenzyme A biosynthesis</keyword>
<keyword id="KW-0963">Cytoplasm</keyword>
<keyword id="KW-0460">Magnesium</keyword>
<keyword id="KW-0547">Nucleotide-binding</keyword>
<keyword id="KW-0548">Nucleotidyltransferase</keyword>
<keyword id="KW-0808">Transferase</keyword>
<evidence type="ECO:0000255" key="1">
    <source>
        <dbReference type="HAMAP-Rule" id="MF_00151"/>
    </source>
</evidence>
<comment type="function">
    <text evidence="1">Reversibly transfers an adenylyl group from ATP to 4'-phosphopantetheine, yielding dephospho-CoA (dPCoA) and pyrophosphate.</text>
</comment>
<comment type="catalytic activity">
    <reaction evidence="1">
        <text>(R)-4'-phosphopantetheine + ATP + H(+) = 3'-dephospho-CoA + diphosphate</text>
        <dbReference type="Rhea" id="RHEA:19801"/>
        <dbReference type="ChEBI" id="CHEBI:15378"/>
        <dbReference type="ChEBI" id="CHEBI:30616"/>
        <dbReference type="ChEBI" id="CHEBI:33019"/>
        <dbReference type="ChEBI" id="CHEBI:57328"/>
        <dbReference type="ChEBI" id="CHEBI:61723"/>
        <dbReference type="EC" id="2.7.7.3"/>
    </reaction>
</comment>
<comment type="cofactor">
    <cofactor evidence="1">
        <name>Mg(2+)</name>
        <dbReference type="ChEBI" id="CHEBI:18420"/>
    </cofactor>
</comment>
<comment type="pathway">
    <text evidence="1">Cofactor biosynthesis; coenzyme A biosynthesis; CoA from (R)-pantothenate: step 4/5.</text>
</comment>
<comment type="subunit">
    <text evidence="1">Homohexamer.</text>
</comment>
<comment type="subcellular location">
    <subcellularLocation>
        <location evidence="1">Cytoplasm</location>
    </subcellularLocation>
</comment>
<comment type="similarity">
    <text evidence="1">Belongs to the bacterial CoaD family.</text>
</comment>
<feature type="chain" id="PRO_1000011145" description="Phosphopantetheine adenylyltransferase">
    <location>
        <begin position="1"/>
        <end position="162"/>
    </location>
</feature>
<feature type="binding site" evidence="1">
    <location>
        <begin position="10"/>
        <end position="11"/>
    </location>
    <ligand>
        <name>ATP</name>
        <dbReference type="ChEBI" id="CHEBI:30616"/>
    </ligand>
</feature>
<feature type="binding site" evidence="1">
    <location>
        <position position="10"/>
    </location>
    <ligand>
        <name>substrate</name>
    </ligand>
</feature>
<feature type="binding site" evidence="1">
    <location>
        <position position="18"/>
    </location>
    <ligand>
        <name>ATP</name>
        <dbReference type="ChEBI" id="CHEBI:30616"/>
    </ligand>
</feature>
<feature type="binding site" evidence="1">
    <location>
        <position position="42"/>
    </location>
    <ligand>
        <name>substrate</name>
    </ligand>
</feature>
<feature type="binding site" evidence="1">
    <location>
        <position position="74"/>
    </location>
    <ligand>
        <name>substrate</name>
    </ligand>
</feature>
<feature type="binding site" evidence="1">
    <location>
        <position position="88"/>
    </location>
    <ligand>
        <name>substrate</name>
    </ligand>
</feature>
<feature type="binding site" evidence="1">
    <location>
        <begin position="89"/>
        <end position="91"/>
    </location>
    <ligand>
        <name>ATP</name>
        <dbReference type="ChEBI" id="CHEBI:30616"/>
    </ligand>
</feature>
<feature type="binding site" evidence="1">
    <location>
        <position position="99"/>
    </location>
    <ligand>
        <name>ATP</name>
        <dbReference type="ChEBI" id="CHEBI:30616"/>
    </ligand>
</feature>
<feature type="binding site" evidence="1">
    <location>
        <begin position="124"/>
        <end position="130"/>
    </location>
    <ligand>
        <name>ATP</name>
        <dbReference type="ChEBI" id="CHEBI:30616"/>
    </ligand>
</feature>
<feature type="site" description="Transition state stabilizer" evidence="1">
    <location>
        <position position="18"/>
    </location>
</feature>
<protein>
    <recommendedName>
        <fullName evidence="1">Phosphopantetheine adenylyltransferase</fullName>
        <ecNumber evidence="1">2.7.7.3</ecNumber>
    </recommendedName>
    <alternativeName>
        <fullName evidence="1">Dephospho-CoA pyrophosphorylase</fullName>
    </alternativeName>
    <alternativeName>
        <fullName evidence="1">Pantetheine-phosphate adenylyltransferase</fullName>
        <shortName evidence="1">PPAT</shortName>
    </alternativeName>
</protein>
<dbReference type="EC" id="2.7.7.3" evidence="1"/>
<dbReference type="EMBL" id="CP000803">
    <property type="protein sequence ID" value="ABU61880.1"/>
    <property type="molecule type" value="Genomic_DNA"/>
</dbReference>
<dbReference type="RefSeq" id="WP_003016535.1">
    <property type="nucleotide sequence ID" value="NC_009749.1"/>
</dbReference>
<dbReference type="SMR" id="A7ND27"/>
<dbReference type="KEGG" id="fta:FTA_1405"/>
<dbReference type="HOGENOM" id="CLU_100149_0_1_6"/>
<dbReference type="UniPathway" id="UPA00241">
    <property type="reaction ID" value="UER00355"/>
</dbReference>
<dbReference type="GO" id="GO:0005737">
    <property type="term" value="C:cytoplasm"/>
    <property type="evidence" value="ECO:0007669"/>
    <property type="project" value="UniProtKB-SubCell"/>
</dbReference>
<dbReference type="GO" id="GO:0005524">
    <property type="term" value="F:ATP binding"/>
    <property type="evidence" value="ECO:0007669"/>
    <property type="project" value="UniProtKB-KW"/>
</dbReference>
<dbReference type="GO" id="GO:0004595">
    <property type="term" value="F:pantetheine-phosphate adenylyltransferase activity"/>
    <property type="evidence" value="ECO:0007669"/>
    <property type="project" value="UniProtKB-UniRule"/>
</dbReference>
<dbReference type="GO" id="GO:0015937">
    <property type="term" value="P:coenzyme A biosynthetic process"/>
    <property type="evidence" value="ECO:0007669"/>
    <property type="project" value="UniProtKB-UniRule"/>
</dbReference>
<dbReference type="CDD" id="cd02163">
    <property type="entry name" value="PPAT"/>
    <property type="match status" value="1"/>
</dbReference>
<dbReference type="Gene3D" id="3.40.50.620">
    <property type="entry name" value="HUPs"/>
    <property type="match status" value="1"/>
</dbReference>
<dbReference type="HAMAP" id="MF_00151">
    <property type="entry name" value="PPAT_bact"/>
    <property type="match status" value="1"/>
</dbReference>
<dbReference type="InterPro" id="IPR004821">
    <property type="entry name" value="Cyt_trans-like"/>
</dbReference>
<dbReference type="InterPro" id="IPR001980">
    <property type="entry name" value="PPAT"/>
</dbReference>
<dbReference type="InterPro" id="IPR014729">
    <property type="entry name" value="Rossmann-like_a/b/a_fold"/>
</dbReference>
<dbReference type="NCBIfam" id="TIGR01510">
    <property type="entry name" value="coaD_prev_kdtB"/>
    <property type="match status" value="1"/>
</dbReference>
<dbReference type="NCBIfam" id="TIGR00125">
    <property type="entry name" value="cyt_tran_rel"/>
    <property type="match status" value="1"/>
</dbReference>
<dbReference type="PANTHER" id="PTHR21342">
    <property type="entry name" value="PHOSPHOPANTETHEINE ADENYLYLTRANSFERASE"/>
    <property type="match status" value="1"/>
</dbReference>
<dbReference type="PANTHER" id="PTHR21342:SF1">
    <property type="entry name" value="PHOSPHOPANTETHEINE ADENYLYLTRANSFERASE"/>
    <property type="match status" value="1"/>
</dbReference>
<dbReference type="Pfam" id="PF01467">
    <property type="entry name" value="CTP_transf_like"/>
    <property type="match status" value="1"/>
</dbReference>
<dbReference type="PRINTS" id="PR01020">
    <property type="entry name" value="LPSBIOSNTHSS"/>
</dbReference>
<dbReference type="SUPFAM" id="SSF52374">
    <property type="entry name" value="Nucleotidylyl transferase"/>
    <property type="match status" value="1"/>
</dbReference>
<name>COAD_FRATF</name>